<feature type="chain" id="PRO_0000327574" description="Enolase-phosphatase E1">
    <location>
        <begin position="1"/>
        <end position="267"/>
    </location>
</feature>
<feature type="binding site" evidence="1">
    <location>
        <position position="11"/>
    </location>
    <ligand>
        <name>Mg(2+)</name>
        <dbReference type="ChEBI" id="CHEBI:18420"/>
    </ligand>
</feature>
<feature type="binding site" evidence="1">
    <location>
        <position position="13"/>
    </location>
    <ligand>
        <name>Mg(2+)</name>
        <dbReference type="ChEBI" id="CHEBI:18420"/>
    </ligand>
</feature>
<feature type="binding site" evidence="1">
    <location>
        <begin position="155"/>
        <end position="156"/>
    </location>
    <ligand>
        <name>substrate</name>
    </ligand>
</feature>
<feature type="binding site" evidence="1">
    <location>
        <position position="189"/>
    </location>
    <ligand>
        <name>substrate</name>
    </ligand>
</feature>
<feature type="binding site" evidence="1">
    <location>
        <position position="215"/>
    </location>
    <ligand>
        <name>Mg(2+)</name>
        <dbReference type="ChEBI" id="CHEBI:18420"/>
    </ligand>
</feature>
<proteinExistence type="inferred from homology"/>
<comment type="function">
    <text evidence="1">Bifunctional enzyme that catalyzes the enolization of 2,3-diketo-5-methylthiopentyl-1-phosphate (DK-MTP-1-P) into the intermediate 2-hydroxy-3-keto-5-methylthiopentenyl-1-phosphate (HK-MTPenyl-1-P), which is then dephosphorylated to form the acireductone 1,2-dihydroxy-3-keto-5-methylthiopentene (DHK-MTPene).</text>
</comment>
<comment type="catalytic activity">
    <reaction evidence="1">
        <text>5-methylsulfanyl-2,3-dioxopentyl phosphate + H2O = 1,2-dihydroxy-5-(methylsulfanyl)pent-1-en-3-one + phosphate</text>
        <dbReference type="Rhea" id="RHEA:21700"/>
        <dbReference type="ChEBI" id="CHEBI:15377"/>
        <dbReference type="ChEBI" id="CHEBI:43474"/>
        <dbReference type="ChEBI" id="CHEBI:49252"/>
        <dbReference type="ChEBI" id="CHEBI:58828"/>
        <dbReference type="EC" id="3.1.3.77"/>
    </reaction>
</comment>
<comment type="cofactor">
    <cofactor evidence="1">
        <name>Mg(2+)</name>
        <dbReference type="ChEBI" id="CHEBI:18420"/>
    </cofactor>
    <text evidence="1">Binds 1 Mg(2+) ion per subunit.</text>
</comment>
<comment type="pathway">
    <text evidence="1">Amino-acid biosynthesis; L-methionine biosynthesis via salvage pathway; L-methionine from S-methyl-5-thio-alpha-D-ribose 1-phosphate: step 3/6.</text>
</comment>
<comment type="pathway">
    <text evidence="1">Amino-acid biosynthesis; L-methionine biosynthesis via salvage pathway; L-methionine from S-methyl-5-thio-alpha-D-ribose 1-phosphate: step 4/6.</text>
</comment>
<comment type="subunit">
    <text evidence="1">Monomer.</text>
</comment>
<comment type="subcellular location">
    <subcellularLocation>
        <location evidence="1">Cytoplasm</location>
    </subcellularLocation>
    <subcellularLocation>
        <location evidence="1">Nucleus</location>
    </subcellularLocation>
</comment>
<comment type="similarity">
    <text evidence="1">Belongs to the HAD-like hydrolase superfamily. MasA/MtnC family.</text>
</comment>
<name>ENOPH_DICDI</name>
<keyword id="KW-0028">Amino-acid biosynthesis</keyword>
<keyword id="KW-0963">Cytoplasm</keyword>
<keyword id="KW-0378">Hydrolase</keyword>
<keyword id="KW-0460">Magnesium</keyword>
<keyword id="KW-0479">Metal-binding</keyword>
<keyword id="KW-0486">Methionine biosynthesis</keyword>
<keyword id="KW-0539">Nucleus</keyword>
<keyword id="KW-1185">Reference proteome</keyword>
<gene>
    <name type="primary">enoph1</name>
    <name type="ORF">DDB_G0268036</name>
</gene>
<evidence type="ECO:0000255" key="1">
    <source>
        <dbReference type="HAMAP-Rule" id="MF_03117"/>
    </source>
</evidence>
<protein>
    <recommendedName>
        <fullName evidence="1">Enolase-phosphatase E1</fullName>
        <ecNumber evidence="1">3.1.3.77</ecNumber>
    </recommendedName>
    <alternativeName>
        <fullName evidence="1">2,3-diketo-5-methylthio-1-phosphopentane phosphatase</fullName>
    </alternativeName>
</protein>
<accession>Q55FM6</accession>
<dbReference type="EC" id="3.1.3.77" evidence="1"/>
<dbReference type="EMBL" id="AAFI02000003">
    <property type="protein sequence ID" value="EAL73471.1"/>
    <property type="molecule type" value="Genomic_DNA"/>
</dbReference>
<dbReference type="RefSeq" id="XP_647507.1">
    <property type="nucleotide sequence ID" value="XM_642415.1"/>
</dbReference>
<dbReference type="SMR" id="Q55FM6"/>
<dbReference type="FunCoup" id="Q55FM6">
    <property type="interactions" value="52"/>
</dbReference>
<dbReference type="STRING" id="44689.Q55FM6"/>
<dbReference type="PaxDb" id="44689-DDB0230999"/>
<dbReference type="EnsemblProtists" id="EAL73471">
    <property type="protein sequence ID" value="EAL73471"/>
    <property type="gene ID" value="DDB_G0268036"/>
</dbReference>
<dbReference type="GeneID" id="8616314"/>
<dbReference type="KEGG" id="ddi:DDB_G0268036"/>
<dbReference type="dictyBase" id="DDB_G0268036"/>
<dbReference type="VEuPathDB" id="AmoebaDB:DDB_G0268036"/>
<dbReference type="eggNOG" id="KOG2630">
    <property type="taxonomic scope" value="Eukaryota"/>
</dbReference>
<dbReference type="HOGENOM" id="CLU_023273_0_0_1"/>
<dbReference type="InParanoid" id="Q55FM6"/>
<dbReference type="OMA" id="LQGMVWE"/>
<dbReference type="PhylomeDB" id="Q55FM6"/>
<dbReference type="Reactome" id="R-DDI-1237112">
    <property type="pathway name" value="Methionine salvage pathway"/>
</dbReference>
<dbReference type="UniPathway" id="UPA00904">
    <property type="reaction ID" value="UER00876"/>
</dbReference>
<dbReference type="UniPathway" id="UPA00904">
    <property type="reaction ID" value="UER00877"/>
</dbReference>
<dbReference type="PRO" id="PR:Q55FM6"/>
<dbReference type="Proteomes" id="UP000002195">
    <property type="component" value="Chromosome 1"/>
</dbReference>
<dbReference type="GO" id="GO:0005737">
    <property type="term" value="C:cytoplasm"/>
    <property type="evidence" value="ECO:0007669"/>
    <property type="project" value="UniProtKB-SubCell"/>
</dbReference>
<dbReference type="GO" id="GO:0005634">
    <property type="term" value="C:nucleus"/>
    <property type="evidence" value="ECO:0007669"/>
    <property type="project" value="UniProtKB-SubCell"/>
</dbReference>
<dbReference type="GO" id="GO:0043874">
    <property type="term" value="F:acireductone synthase activity"/>
    <property type="evidence" value="ECO:0000250"/>
    <property type="project" value="UniProtKB"/>
</dbReference>
<dbReference type="GO" id="GO:0000287">
    <property type="term" value="F:magnesium ion binding"/>
    <property type="evidence" value="ECO:0007669"/>
    <property type="project" value="UniProtKB-UniRule"/>
</dbReference>
<dbReference type="GO" id="GO:0019509">
    <property type="term" value="P:L-methionine salvage from methylthioadenosine"/>
    <property type="evidence" value="ECO:0000250"/>
    <property type="project" value="UniProtKB"/>
</dbReference>
<dbReference type="CDD" id="cd01629">
    <property type="entry name" value="HAD_EP"/>
    <property type="match status" value="1"/>
</dbReference>
<dbReference type="FunFam" id="1.10.720.60:FF:000011">
    <property type="entry name" value="enolase-phosphatase E1-like"/>
    <property type="match status" value="1"/>
</dbReference>
<dbReference type="Gene3D" id="1.10.720.60">
    <property type="match status" value="1"/>
</dbReference>
<dbReference type="Gene3D" id="3.40.50.1000">
    <property type="entry name" value="HAD superfamily/HAD-like"/>
    <property type="match status" value="1"/>
</dbReference>
<dbReference type="HAMAP" id="MF_03117">
    <property type="entry name" value="Salvage_MtnC_euk"/>
    <property type="match status" value="1"/>
</dbReference>
<dbReference type="InterPro" id="IPR023943">
    <property type="entry name" value="Enolase-ppase_E1"/>
</dbReference>
<dbReference type="InterPro" id="IPR027511">
    <property type="entry name" value="ENOPH1_eukaryotes"/>
</dbReference>
<dbReference type="InterPro" id="IPR036412">
    <property type="entry name" value="HAD-like_sf"/>
</dbReference>
<dbReference type="InterPro" id="IPR023214">
    <property type="entry name" value="HAD_sf"/>
</dbReference>
<dbReference type="NCBIfam" id="TIGR01691">
    <property type="entry name" value="enolase-ppase"/>
    <property type="match status" value="1"/>
</dbReference>
<dbReference type="PANTHER" id="PTHR20371">
    <property type="entry name" value="ENOLASE-PHOSPHATASE E1"/>
    <property type="match status" value="1"/>
</dbReference>
<dbReference type="PANTHER" id="PTHR20371:SF1">
    <property type="entry name" value="ENOLASE-PHOSPHATASE E1"/>
    <property type="match status" value="1"/>
</dbReference>
<dbReference type="Pfam" id="PF00702">
    <property type="entry name" value="Hydrolase"/>
    <property type="match status" value="1"/>
</dbReference>
<dbReference type="SFLD" id="SFLDG01133">
    <property type="entry name" value="C1.5.4:_Enolase-phosphatase_Li"/>
    <property type="match status" value="1"/>
</dbReference>
<dbReference type="SFLD" id="SFLDF00044">
    <property type="entry name" value="enolase-phosphatase"/>
    <property type="match status" value="1"/>
</dbReference>
<dbReference type="SUPFAM" id="SSF56784">
    <property type="entry name" value="HAD-like"/>
    <property type="match status" value="1"/>
</dbReference>
<sequence length="267" mass="30594">MTPNIHTVILDIEGTTTPISFVHDVLFPYIRDNLVRHINQKWGSEELKQDIKELYKLYLEDNKASELVVNNQFNTPEILNPDDESTDKEKLIESVIRNVIYQMDNDRKSTPLKQLQGHMWLEGYENELVKGVVFPEVPKAFENWNLNHIDIYIYSSGSIAAQKLLFNYSNFGSLLPYIKGHFDTTIGGKLHPSSYEKILSTINNGSPNSYLFVTDSILEAKAARESGLNVCLSIRDGNPPIVDRELLNTFDQVSSFDQLFNKFNFKN</sequence>
<reference key="1">
    <citation type="journal article" date="2005" name="Nature">
        <title>The genome of the social amoeba Dictyostelium discoideum.</title>
        <authorList>
            <person name="Eichinger L."/>
            <person name="Pachebat J.A."/>
            <person name="Gloeckner G."/>
            <person name="Rajandream M.A."/>
            <person name="Sucgang R."/>
            <person name="Berriman M."/>
            <person name="Song J."/>
            <person name="Olsen R."/>
            <person name="Szafranski K."/>
            <person name="Xu Q."/>
            <person name="Tunggal B."/>
            <person name="Kummerfeld S."/>
            <person name="Madera M."/>
            <person name="Konfortov B.A."/>
            <person name="Rivero F."/>
            <person name="Bankier A.T."/>
            <person name="Lehmann R."/>
            <person name="Hamlin N."/>
            <person name="Davies R."/>
            <person name="Gaudet P."/>
            <person name="Fey P."/>
            <person name="Pilcher K."/>
            <person name="Chen G."/>
            <person name="Saunders D."/>
            <person name="Sodergren E.J."/>
            <person name="Davis P."/>
            <person name="Kerhornou A."/>
            <person name="Nie X."/>
            <person name="Hall N."/>
            <person name="Anjard C."/>
            <person name="Hemphill L."/>
            <person name="Bason N."/>
            <person name="Farbrother P."/>
            <person name="Desany B."/>
            <person name="Just E."/>
            <person name="Morio T."/>
            <person name="Rost R."/>
            <person name="Churcher C.M."/>
            <person name="Cooper J."/>
            <person name="Haydock S."/>
            <person name="van Driessche N."/>
            <person name="Cronin A."/>
            <person name="Goodhead I."/>
            <person name="Muzny D.M."/>
            <person name="Mourier T."/>
            <person name="Pain A."/>
            <person name="Lu M."/>
            <person name="Harper D."/>
            <person name="Lindsay R."/>
            <person name="Hauser H."/>
            <person name="James K.D."/>
            <person name="Quiles M."/>
            <person name="Madan Babu M."/>
            <person name="Saito T."/>
            <person name="Buchrieser C."/>
            <person name="Wardroper A."/>
            <person name="Felder M."/>
            <person name="Thangavelu M."/>
            <person name="Johnson D."/>
            <person name="Knights A."/>
            <person name="Loulseged H."/>
            <person name="Mungall K.L."/>
            <person name="Oliver K."/>
            <person name="Price C."/>
            <person name="Quail M.A."/>
            <person name="Urushihara H."/>
            <person name="Hernandez J."/>
            <person name="Rabbinowitsch E."/>
            <person name="Steffen D."/>
            <person name="Sanders M."/>
            <person name="Ma J."/>
            <person name="Kohara Y."/>
            <person name="Sharp S."/>
            <person name="Simmonds M.N."/>
            <person name="Spiegler S."/>
            <person name="Tivey A."/>
            <person name="Sugano S."/>
            <person name="White B."/>
            <person name="Walker D."/>
            <person name="Woodward J.R."/>
            <person name="Winckler T."/>
            <person name="Tanaka Y."/>
            <person name="Shaulsky G."/>
            <person name="Schleicher M."/>
            <person name="Weinstock G.M."/>
            <person name="Rosenthal A."/>
            <person name="Cox E.C."/>
            <person name="Chisholm R.L."/>
            <person name="Gibbs R.A."/>
            <person name="Loomis W.F."/>
            <person name="Platzer M."/>
            <person name="Kay R.R."/>
            <person name="Williams J.G."/>
            <person name="Dear P.H."/>
            <person name="Noegel A.A."/>
            <person name="Barrell B.G."/>
            <person name="Kuspa A."/>
        </authorList>
    </citation>
    <scope>NUCLEOTIDE SEQUENCE [LARGE SCALE GENOMIC DNA]</scope>
    <source>
        <strain>AX4</strain>
    </source>
</reference>
<organism>
    <name type="scientific">Dictyostelium discoideum</name>
    <name type="common">Social amoeba</name>
    <dbReference type="NCBI Taxonomy" id="44689"/>
    <lineage>
        <taxon>Eukaryota</taxon>
        <taxon>Amoebozoa</taxon>
        <taxon>Evosea</taxon>
        <taxon>Eumycetozoa</taxon>
        <taxon>Dictyostelia</taxon>
        <taxon>Dictyosteliales</taxon>
        <taxon>Dictyosteliaceae</taxon>
        <taxon>Dictyostelium</taxon>
    </lineage>
</organism>